<comment type="function">
    <text evidence="1">Could be a nuclease involved in processing of the 5'-end of pre-16S rRNA.</text>
</comment>
<comment type="subcellular location">
    <subcellularLocation>
        <location evidence="1">Cytoplasm</location>
    </subcellularLocation>
</comment>
<comment type="similarity">
    <text evidence="1">Belongs to the YqgF nuclease family.</text>
</comment>
<evidence type="ECO:0000255" key="1">
    <source>
        <dbReference type="HAMAP-Rule" id="MF_00651"/>
    </source>
</evidence>
<gene>
    <name type="ordered locus">Wbm0696</name>
</gene>
<protein>
    <recommendedName>
        <fullName evidence="1">Putative pre-16S rRNA nuclease</fullName>
        <ecNumber evidence="1">3.1.-.-</ecNumber>
    </recommendedName>
</protein>
<keyword id="KW-0963">Cytoplasm</keyword>
<keyword id="KW-0378">Hydrolase</keyword>
<keyword id="KW-0540">Nuclease</keyword>
<keyword id="KW-1185">Reference proteome</keyword>
<keyword id="KW-0690">Ribosome biogenesis</keyword>
<organism>
    <name type="scientific">Wolbachia sp. subsp. Brugia malayi (strain TRS)</name>
    <dbReference type="NCBI Taxonomy" id="292805"/>
    <lineage>
        <taxon>Bacteria</taxon>
        <taxon>Pseudomonadati</taxon>
        <taxon>Pseudomonadota</taxon>
        <taxon>Alphaproteobacteria</taxon>
        <taxon>Rickettsiales</taxon>
        <taxon>Anaplasmataceae</taxon>
        <taxon>Wolbachieae</taxon>
        <taxon>Wolbachia</taxon>
    </lineage>
</organism>
<name>YQGF_WOLTR</name>
<sequence>MLYRDPYEFLKSIPKDKCIMCLDMGEKQIGIAFSDKTQLIATAHSVYYRKNISKDLGYLNRIFKKNEAGSIVIGLPLEIDGQKSEWCKTIIKFANKMIKKYKVSTYLQDESLSTSIAAHTLKISGVSTTKSKRIDDKISACIILQRTLDKINVIK</sequence>
<proteinExistence type="inferred from homology"/>
<dbReference type="EC" id="3.1.-.-" evidence="1"/>
<dbReference type="EMBL" id="AE017321">
    <property type="protein sequence ID" value="AAW71284.1"/>
    <property type="molecule type" value="Genomic_DNA"/>
</dbReference>
<dbReference type="SMR" id="Q5GRU0"/>
<dbReference type="STRING" id="292805.Wbm0696"/>
<dbReference type="KEGG" id="wbm:Wbm0696"/>
<dbReference type="eggNOG" id="COG0816">
    <property type="taxonomic scope" value="Bacteria"/>
</dbReference>
<dbReference type="HOGENOM" id="CLU_098240_2_2_5"/>
<dbReference type="Proteomes" id="UP000000534">
    <property type="component" value="Chromosome"/>
</dbReference>
<dbReference type="GO" id="GO:0005829">
    <property type="term" value="C:cytosol"/>
    <property type="evidence" value="ECO:0007669"/>
    <property type="project" value="TreeGrafter"/>
</dbReference>
<dbReference type="GO" id="GO:0004518">
    <property type="term" value="F:nuclease activity"/>
    <property type="evidence" value="ECO:0007669"/>
    <property type="project" value="UniProtKB-KW"/>
</dbReference>
<dbReference type="GO" id="GO:0000967">
    <property type="term" value="P:rRNA 5'-end processing"/>
    <property type="evidence" value="ECO:0007669"/>
    <property type="project" value="UniProtKB-UniRule"/>
</dbReference>
<dbReference type="CDD" id="cd16964">
    <property type="entry name" value="YqgF"/>
    <property type="match status" value="1"/>
</dbReference>
<dbReference type="Gene3D" id="3.30.420.140">
    <property type="entry name" value="YqgF/RNase H-like domain"/>
    <property type="match status" value="1"/>
</dbReference>
<dbReference type="HAMAP" id="MF_00651">
    <property type="entry name" value="Nuclease_YqgF"/>
    <property type="match status" value="1"/>
</dbReference>
<dbReference type="InterPro" id="IPR012337">
    <property type="entry name" value="RNaseH-like_sf"/>
</dbReference>
<dbReference type="InterPro" id="IPR005227">
    <property type="entry name" value="YqgF"/>
</dbReference>
<dbReference type="InterPro" id="IPR006641">
    <property type="entry name" value="YqgF/RNaseH-like_dom"/>
</dbReference>
<dbReference type="InterPro" id="IPR037027">
    <property type="entry name" value="YqgF/RNaseH-like_dom_sf"/>
</dbReference>
<dbReference type="NCBIfam" id="TIGR00250">
    <property type="entry name" value="RNAse_H_YqgF"/>
    <property type="match status" value="1"/>
</dbReference>
<dbReference type="PANTHER" id="PTHR33317">
    <property type="entry name" value="POLYNUCLEOTIDYL TRANSFERASE, RIBONUCLEASE H-LIKE SUPERFAMILY PROTEIN"/>
    <property type="match status" value="1"/>
</dbReference>
<dbReference type="PANTHER" id="PTHR33317:SF4">
    <property type="entry name" value="POLYNUCLEOTIDYL TRANSFERASE, RIBONUCLEASE H-LIKE SUPERFAMILY PROTEIN"/>
    <property type="match status" value="1"/>
</dbReference>
<dbReference type="Pfam" id="PF03652">
    <property type="entry name" value="RuvX"/>
    <property type="match status" value="1"/>
</dbReference>
<dbReference type="SMART" id="SM00732">
    <property type="entry name" value="YqgFc"/>
    <property type="match status" value="1"/>
</dbReference>
<dbReference type="SUPFAM" id="SSF53098">
    <property type="entry name" value="Ribonuclease H-like"/>
    <property type="match status" value="1"/>
</dbReference>
<feature type="chain" id="PRO_0000257615" description="Putative pre-16S rRNA nuclease">
    <location>
        <begin position="1"/>
        <end position="155"/>
    </location>
</feature>
<reference key="1">
    <citation type="journal article" date="2005" name="PLoS Biol.">
        <title>The Wolbachia genome of Brugia malayi: endosymbiont evolution within a human pathogenic nematode.</title>
        <authorList>
            <person name="Foster J."/>
            <person name="Ganatra M."/>
            <person name="Kamal I."/>
            <person name="Ware J."/>
            <person name="Makarova K."/>
            <person name="Ivanova N."/>
            <person name="Bhattacharyya A."/>
            <person name="Kapatral V."/>
            <person name="Kumar S."/>
            <person name="Posfai J."/>
            <person name="Vincze T."/>
            <person name="Ingram J."/>
            <person name="Moran L."/>
            <person name="Lapidus A."/>
            <person name="Omelchenko M."/>
            <person name="Kyrpides N."/>
            <person name="Ghedin E."/>
            <person name="Wang S."/>
            <person name="Goltsman E."/>
            <person name="Joukov V."/>
            <person name="Ostrovskaya O."/>
            <person name="Tsukerman K."/>
            <person name="Mazur M."/>
            <person name="Comb D."/>
            <person name="Koonin E."/>
            <person name="Slatko B."/>
        </authorList>
    </citation>
    <scope>NUCLEOTIDE SEQUENCE [LARGE SCALE GENOMIC DNA]</scope>
    <source>
        <strain>TRS</strain>
    </source>
</reference>
<accession>Q5GRU0</accession>